<accession>B2U1F0</accession>
<dbReference type="EC" id="4.1.99.12" evidence="1"/>
<dbReference type="EMBL" id="CP001063">
    <property type="protein sequence ID" value="ACD09437.1"/>
    <property type="molecule type" value="Genomic_DNA"/>
</dbReference>
<dbReference type="RefSeq" id="WP_001076997.1">
    <property type="nucleotide sequence ID" value="NC_010658.1"/>
</dbReference>
<dbReference type="SMR" id="B2U1F0"/>
<dbReference type="STRING" id="344609.SbBS512_E3476"/>
<dbReference type="GeneID" id="93778953"/>
<dbReference type="KEGG" id="sbc:SbBS512_E3476"/>
<dbReference type="HOGENOM" id="CLU_020273_3_0_6"/>
<dbReference type="UniPathway" id="UPA00275">
    <property type="reaction ID" value="UER00399"/>
</dbReference>
<dbReference type="Proteomes" id="UP000001030">
    <property type="component" value="Chromosome"/>
</dbReference>
<dbReference type="GO" id="GO:0005829">
    <property type="term" value="C:cytosol"/>
    <property type="evidence" value="ECO:0007669"/>
    <property type="project" value="TreeGrafter"/>
</dbReference>
<dbReference type="GO" id="GO:0008686">
    <property type="term" value="F:3,4-dihydroxy-2-butanone-4-phosphate synthase activity"/>
    <property type="evidence" value="ECO:0007669"/>
    <property type="project" value="UniProtKB-UniRule"/>
</dbReference>
<dbReference type="GO" id="GO:0000287">
    <property type="term" value="F:magnesium ion binding"/>
    <property type="evidence" value="ECO:0007669"/>
    <property type="project" value="UniProtKB-UniRule"/>
</dbReference>
<dbReference type="GO" id="GO:0030145">
    <property type="term" value="F:manganese ion binding"/>
    <property type="evidence" value="ECO:0007669"/>
    <property type="project" value="UniProtKB-UniRule"/>
</dbReference>
<dbReference type="GO" id="GO:0009231">
    <property type="term" value="P:riboflavin biosynthetic process"/>
    <property type="evidence" value="ECO:0007669"/>
    <property type="project" value="UniProtKB-UniRule"/>
</dbReference>
<dbReference type="FunFam" id="3.90.870.10:FF:000002">
    <property type="entry name" value="3,4-dihydroxy-2-butanone 4-phosphate synthase"/>
    <property type="match status" value="1"/>
</dbReference>
<dbReference type="Gene3D" id="3.90.870.10">
    <property type="entry name" value="DHBP synthase"/>
    <property type="match status" value="1"/>
</dbReference>
<dbReference type="HAMAP" id="MF_00180">
    <property type="entry name" value="RibB"/>
    <property type="match status" value="1"/>
</dbReference>
<dbReference type="InterPro" id="IPR017945">
    <property type="entry name" value="DHBP_synth_RibB-like_a/b_dom"/>
</dbReference>
<dbReference type="InterPro" id="IPR000422">
    <property type="entry name" value="DHBP_synthase_RibB"/>
</dbReference>
<dbReference type="NCBIfam" id="TIGR00506">
    <property type="entry name" value="ribB"/>
    <property type="match status" value="1"/>
</dbReference>
<dbReference type="PANTHER" id="PTHR21327:SF38">
    <property type="entry name" value="3,4-DIHYDROXY-2-BUTANONE 4-PHOSPHATE SYNTHASE"/>
    <property type="match status" value="1"/>
</dbReference>
<dbReference type="PANTHER" id="PTHR21327">
    <property type="entry name" value="GTP CYCLOHYDROLASE II-RELATED"/>
    <property type="match status" value="1"/>
</dbReference>
<dbReference type="Pfam" id="PF00926">
    <property type="entry name" value="DHBP_synthase"/>
    <property type="match status" value="1"/>
</dbReference>
<dbReference type="SUPFAM" id="SSF55821">
    <property type="entry name" value="YrdC/RibB"/>
    <property type="match status" value="1"/>
</dbReference>
<proteinExistence type="inferred from homology"/>
<gene>
    <name evidence="1" type="primary">ribB</name>
    <name type="ordered locus">SbBS512_E3476</name>
</gene>
<feature type="chain" id="PRO_1000098292" description="3,4-dihydroxy-2-butanone 4-phosphate synthase">
    <location>
        <begin position="1"/>
        <end position="217"/>
    </location>
</feature>
<feature type="binding site" evidence="1">
    <location>
        <begin position="37"/>
        <end position="38"/>
    </location>
    <ligand>
        <name>D-ribulose 5-phosphate</name>
        <dbReference type="ChEBI" id="CHEBI:58121"/>
    </ligand>
</feature>
<feature type="binding site" evidence="1">
    <location>
        <position position="38"/>
    </location>
    <ligand>
        <name>Mg(2+)</name>
        <dbReference type="ChEBI" id="CHEBI:18420"/>
        <label>1</label>
    </ligand>
</feature>
<feature type="binding site" evidence="1">
    <location>
        <position position="38"/>
    </location>
    <ligand>
        <name>Mg(2+)</name>
        <dbReference type="ChEBI" id="CHEBI:18420"/>
        <label>2</label>
    </ligand>
</feature>
<feature type="binding site" evidence="1">
    <location>
        <position position="42"/>
    </location>
    <ligand>
        <name>D-ribulose 5-phosphate</name>
        <dbReference type="ChEBI" id="CHEBI:58121"/>
    </ligand>
</feature>
<feature type="binding site" evidence="1">
    <location>
        <begin position="150"/>
        <end position="154"/>
    </location>
    <ligand>
        <name>D-ribulose 5-phosphate</name>
        <dbReference type="ChEBI" id="CHEBI:58121"/>
    </ligand>
</feature>
<feature type="binding site" evidence="1">
    <location>
        <position position="153"/>
    </location>
    <ligand>
        <name>Mg(2+)</name>
        <dbReference type="ChEBI" id="CHEBI:18420"/>
        <label>2</label>
    </ligand>
</feature>
<feature type="binding site" evidence="1">
    <location>
        <position position="174"/>
    </location>
    <ligand>
        <name>D-ribulose 5-phosphate</name>
        <dbReference type="ChEBI" id="CHEBI:58121"/>
    </ligand>
</feature>
<feature type="site" description="Essential for catalytic activity" evidence="1">
    <location>
        <position position="136"/>
    </location>
</feature>
<feature type="site" description="Essential for catalytic activity" evidence="1">
    <location>
        <position position="174"/>
    </location>
</feature>
<organism>
    <name type="scientific">Shigella boydii serotype 18 (strain CDC 3083-94 / BS512)</name>
    <dbReference type="NCBI Taxonomy" id="344609"/>
    <lineage>
        <taxon>Bacteria</taxon>
        <taxon>Pseudomonadati</taxon>
        <taxon>Pseudomonadota</taxon>
        <taxon>Gammaproteobacteria</taxon>
        <taxon>Enterobacterales</taxon>
        <taxon>Enterobacteriaceae</taxon>
        <taxon>Shigella</taxon>
    </lineage>
</organism>
<keyword id="KW-0456">Lyase</keyword>
<keyword id="KW-0460">Magnesium</keyword>
<keyword id="KW-0464">Manganese</keyword>
<keyword id="KW-0479">Metal-binding</keyword>
<keyword id="KW-1185">Reference proteome</keyword>
<keyword id="KW-0686">Riboflavin biosynthesis</keyword>
<protein>
    <recommendedName>
        <fullName evidence="1">3,4-dihydroxy-2-butanone 4-phosphate synthase</fullName>
        <shortName evidence="1">DHBP synthase</shortName>
        <ecNumber evidence="1">4.1.99.12</ecNumber>
    </recommendedName>
</protein>
<reference key="1">
    <citation type="submission" date="2008-05" db="EMBL/GenBank/DDBJ databases">
        <title>Complete sequence of Shigella boydii serotype 18 strain BS512.</title>
        <authorList>
            <person name="Rasko D.A."/>
            <person name="Rosovitz M."/>
            <person name="Maurelli A.T."/>
            <person name="Myers G."/>
            <person name="Seshadri R."/>
            <person name="Cer R."/>
            <person name="Jiang L."/>
            <person name="Ravel J."/>
            <person name="Sebastian Y."/>
        </authorList>
    </citation>
    <scope>NUCLEOTIDE SEQUENCE [LARGE SCALE GENOMIC DNA]</scope>
    <source>
        <strain>CDC 3083-94 / BS512</strain>
    </source>
</reference>
<evidence type="ECO:0000255" key="1">
    <source>
        <dbReference type="HAMAP-Rule" id="MF_00180"/>
    </source>
</evidence>
<name>RIBB_SHIB3</name>
<sequence>MNQTLLSSFGTPFERVENALAALREGRGVMVLDDEDRENEGDMIFPAETMTVEQMALTIRHGSGIVCLCITEDRRKQLDLPMMVENNTSAYGTGFTVTIEAAEGVTTGVSAADRITTVRAAIADGAKPSDLNRPGHVFPLRAQAGGVLTRGGHTEATIDLMTLAGFKPAGVLCELTNDDGTMARAPECIEFANKHNMALVTIEDLVAYRQAHERKAS</sequence>
<comment type="function">
    <text evidence="1">Catalyzes the conversion of D-ribulose 5-phosphate to formate and 3,4-dihydroxy-2-butanone 4-phosphate.</text>
</comment>
<comment type="catalytic activity">
    <reaction evidence="1">
        <text>D-ribulose 5-phosphate = (2S)-2-hydroxy-3-oxobutyl phosphate + formate + H(+)</text>
        <dbReference type="Rhea" id="RHEA:18457"/>
        <dbReference type="ChEBI" id="CHEBI:15378"/>
        <dbReference type="ChEBI" id="CHEBI:15740"/>
        <dbReference type="ChEBI" id="CHEBI:58121"/>
        <dbReference type="ChEBI" id="CHEBI:58830"/>
        <dbReference type="EC" id="4.1.99.12"/>
    </reaction>
</comment>
<comment type="cofactor">
    <cofactor evidence="1">
        <name>Mg(2+)</name>
        <dbReference type="ChEBI" id="CHEBI:18420"/>
    </cofactor>
    <cofactor evidence="1">
        <name>Mn(2+)</name>
        <dbReference type="ChEBI" id="CHEBI:29035"/>
    </cofactor>
    <text evidence="1">Binds 2 divalent metal cations per subunit. Magnesium or manganese.</text>
</comment>
<comment type="pathway">
    <text evidence="1">Cofactor biosynthesis; riboflavin biosynthesis; 2-hydroxy-3-oxobutyl phosphate from D-ribulose 5-phosphate: step 1/1.</text>
</comment>
<comment type="subunit">
    <text evidence="1">Homodimer.</text>
</comment>
<comment type="similarity">
    <text evidence="1">Belongs to the DHBP synthase family.</text>
</comment>